<dbReference type="EC" id="4.2.1.33" evidence="1"/>
<dbReference type="EMBL" id="CP001172">
    <property type="protein sequence ID" value="ACJ57696.1"/>
    <property type="molecule type" value="Genomic_DNA"/>
</dbReference>
<dbReference type="RefSeq" id="WP_000649450.1">
    <property type="nucleotide sequence ID" value="NZ_CP001172.1"/>
</dbReference>
<dbReference type="SMR" id="B7H0T6"/>
<dbReference type="GeneID" id="92892410"/>
<dbReference type="HOGENOM" id="CLU_081378_0_3_6"/>
<dbReference type="UniPathway" id="UPA00048">
    <property type="reaction ID" value="UER00071"/>
</dbReference>
<dbReference type="Proteomes" id="UP000006924">
    <property type="component" value="Chromosome"/>
</dbReference>
<dbReference type="GO" id="GO:0009316">
    <property type="term" value="C:3-isopropylmalate dehydratase complex"/>
    <property type="evidence" value="ECO:0007669"/>
    <property type="project" value="InterPro"/>
</dbReference>
<dbReference type="GO" id="GO:0003861">
    <property type="term" value="F:3-isopropylmalate dehydratase activity"/>
    <property type="evidence" value="ECO:0007669"/>
    <property type="project" value="UniProtKB-UniRule"/>
</dbReference>
<dbReference type="GO" id="GO:0009098">
    <property type="term" value="P:L-leucine biosynthetic process"/>
    <property type="evidence" value="ECO:0007669"/>
    <property type="project" value="UniProtKB-UniRule"/>
</dbReference>
<dbReference type="CDD" id="cd01577">
    <property type="entry name" value="IPMI_Swivel"/>
    <property type="match status" value="1"/>
</dbReference>
<dbReference type="FunFam" id="3.20.19.10:FF:000003">
    <property type="entry name" value="3-isopropylmalate dehydratase small subunit"/>
    <property type="match status" value="1"/>
</dbReference>
<dbReference type="Gene3D" id="3.20.19.10">
    <property type="entry name" value="Aconitase, domain 4"/>
    <property type="match status" value="1"/>
</dbReference>
<dbReference type="HAMAP" id="MF_01031">
    <property type="entry name" value="LeuD_type1"/>
    <property type="match status" value="1"/>
</dbReference>
<dbReference type="InterPro" id="IPR004431">
    <property type="entry name" value="3-IsopropMal_deHydase_ssu"/>
</dbReference>
<dbReference type="InterPro" id="IPR015928">
    <property type="entry name" value="Aconitase/3IPM_dehydase_swvl"/>
</dbReference>
<dbReference type="InterPro" id="IPR000573">
    <property type="entry name" value="AconitaseA/IPMdHydase_ssu_swvl"/>
</dbReference>
<dbReference type="InterPro" id="IPR033940">
    <property type="entry name" value="IPMI_Swivel"/>
</dbReference>
<dbReference type="InterPro" id="IPR050075">
    <property type="entry name" value="LeuD"/>
</dbReference>
<dbReference type="NCBIfam" id="TIGR00171">
    <property type="entry name" value="leuD"/>
    <property type="match status" value="1"/>
</dbReference>
<dbReference type="NCBIfam" id="NF002458">
    <property type="entry name" value="PRK01641.1"/>
    <property type="match status" value="1"/>
</dbReference>
<dbReference type="PANTHER" id="PTHR43345:SF5">
    <property type="entry name" value="3-ISOPROPYLMALATE DEHYDRATASE SMALL SUBUNIT"/>
    <property type="match status" value="1"/>
</dbReference>
<dbReference type="PANTHER" id="PTHR43345">
    <property type="entry name" value="3-ISOPROPYLMALATE DEHYDRATASE SMALL SUBUNIT 2-RELATED-RELATED"/>
    <property type="match status" value="1"/>
</dbReference>
<dbReference type="Pfam" id="PF00694">
    <property type="entry name" value="Aconitase_C"/>
    <property type="match status" value="1"/>
</dbReference>
<dbReference type="SUPFAM" id="SSF52016">
    <property type="entry name" value="LeuD/IlvD-like"/>
    <property type="match status" value="1"/>
</dbReference>
<protein>
    <recommendedName>
        <fullName evidence="1">3-isopropylmalate dehydratase small subunit</fullName>
        <ecNumber evidence="1">4.2.1.33</ecNumber>
    </recommendedName>
    <alternativeName>
        <fullName evidence="1">Alpha-IPM isomerase</fullName>
        <shortName evidence="1">IPMI</shortName>
    </alternativeName>
    <alternativeName>
        <fullName evidence="1">Isopropylmalate isomerase</fullName>
    </alternativeName>
</protein>
<reference key="1">
    <citation type="journal article" date="2008" name="J. Bacteriol.">
        <title>Comparative genome sequence analysis of multidrug-resistant Acinetobacter baumannii.</title>
        <authorList>
            <person name="Adams M.D."/>
            <person name="Goglin K."/>
            <person name="Molyneaux N."/>
            <person name="Hujer K.M."/>
            <person name="Lavender H."/>
            <person name="Jamison J.J."/>
            <person name="MacDonald I.J."/>
            <person name="Martin K.M."/>
            <person name="Russo T."/>
            <person name="Campagnari A.A."/>
            <person name="Hujer A.M."/>
            <person name="Bonomo R.A."/>
            <person name="Gill S.R."/>
        </authorList>
    </citation>
    <scope>NUCLEOTIDE SEQUENCE [LARGE SCALE GENOMIC DNA]</scope>
    <source>
        <strain>AB307-0294</strain>
    </source>
</reference>
<organism>
    <name type="scientific">Acinetobacter baumannii (strain AB307-0294)</name>
    <dbReference type="NCBI Taxonomy" id="557600"/>
    <lineage>
        <taxon>Bacteria</taxon>
        <taxon>Pseudomonadati</taxon>
        <taxon>Pseudomonadota</taxon>
        <taxon>Gammaproteobacteria</taxon>
        <taxon>Moraxellales</taxon>
        <taxon>Moraxellaceae</taxon>
        <taxon>Acinetobacter</taxon>
        <taxon>Acinetobacter calcoaceticus/baumannii complex</taxon>
    </lineage>
</organism>
<keyword id="KW-0028">Amino-acid biosynthesis</keyword>
<keyword id="KW-0100">Branched-chain amino acid biosynthesis</keyword>
<keyword id="KW-0432">Leucine biosynthesis</keyword>
<keyword id="KW-0456">Lyase</keyword>
<gene>
    <name evidence="1" type="primary">leuD</name>
    <name type="ordered locus">ABBFA_003118</name>
</gene>
<name>LEUD_ACIB3</name>
<proteinExistence type="inferred from homology"/>
<accession>B7H0T6</accession>
<comment type="function">
    <text evidence="1">Catalyzes the isomerization between 2-isopropylmalate and 3-isopropylmalate, via the formation of 2-isopropylmaleate.</text>
</comment>
<comment type="catalytic activity">
    <reaction evidence="1">
        <text>(2R,3S)-3-isopropylmalate = (2S)-2-isopropylmalate</text>
        <dbReference type="Rhea" id="RHEA:32287"/>
        <dbReference type="ChEBI" id="CHEBI:1178"/>
        <dbReference type="ChEBI" id="CHEBI:35121"/>
        <dbReference type="EC" id="4.2.1.33"/>
    </reaction>
</comment>
<comment type="pathway">
    <text evidence="1">Amino-acid biosynthesis; L-leucine biosynthesis; L-leucine from 3-methyl-2-oxobutanoate: step 2/4.</text>
</comment>
<comment type="subunit">
    <text evidence="1">Heterodimer of LeuC and LeuD.</text>
</comment>
<comment type="similarity">
    <text evidence="1">Belongs to the LeuD family. LeuD type 1 subfamily.</text>
</comment>
<sequence length="215" mass="24371">MKAYTVEQGIVAPLDRANVDTDLIIPKQFLKSIKRTGFGDNLFDELRYLDEGYPGQDNSVRPKNPDFVLNQPRYQGATVLIARTNFGCGSSREHAPWALNEYGFRTVIAPSFADIFFNNCFKNGMLPVILPEDIVDQLFKECAAQEGYQLTIDLAAQEVRTPTGEAFKFEVDPFRKHCLLNGLDDIGLTLQNADAIRAYEEKTKQVRPWVFQEIN</sequence>
<evidence type="ECO:0000255" key="1">
    <source>
        <dbReference type="HAMAP-Rule" id="MF_01031"/>
    </source>
</evidence>
<feature type="chain" id="PRO_1000135776" description="3-isopropylmalate dehydratase small subunit">
    <location>
        <begin position="1"/>
        <end position="215"/>
    </location>
</feature>